<name>KCY_BURO0</name>
<comment type="catalytic activity">
    <reaction evidence="1">
        <text>CMP + ATP = CDP + ADP</text>
        <dbReference type="Rhea" id="RHEA:11600"/>
        <dbReference type="ChEBI" id="CHEBI:30616"/>
        <dbReference type="ChEBI" id="CHEBI:58069"/>
        <dbReference type="ChEBI" id="CHEBI:60377"/>
        <dbReference type="ChEBI" id="CHEBI:456216"/>
        <dbReference type="EC" id="2.7.4.25"/>
    </reaction>
</comment>
<comment type="catalytic activity">
    <reaction evidence="1">
        <text>dCMP + ATP = dCDP + ADP</text>
        <dbReference type="Rhea" id="RHEA:25094"/>
        <dbReference type="ChEBI" id="CHEBI:30616"/>
        <dbReference type="ChEBI" id="CHEBI:57566"/>
        <dbReference type="ChEBI" id="CHEBI:58593"/>
        <dbReference type="ChEBI" id="CHEBI:456216"/>
        <dbReference type="EC" id="2.7.4.25"/>
    </reaction>
</comment>
<comment type="subcellular location">
    <subcellularLocation>
        <location evidence="1">Cytoplasm</location>
    </subcellularLocation>
</comment>
<comment type="similarity">
    <text evidence="1">Belongs to the cytidylate kinase family. Type 1 subfamily.</text>
</comment>
<reference key="1">
    <citation type="submission" date="2008-02" db="EMBL/GenBank/DDBJ databases">
        <title>Complete sequence of chromosome 1 of Burkholderia cenocepacia MC0-3.</title>
        <authorList>
            <person name="Copeland A."/>
            <person name="Lucas S."/>
            <person name="Lapidus A."/>
            <person name="Barry K."/>
            <person name="Bruce D."/>
            <person name="Goodwin L."/>
            <person name="Glavina del Rio T."/>
            <person name="Dalin E."/>
            <person name="Tice H."/>
            <person name="Pitluck S."/>
            <person name="Chain P."/>
            <person name="Malfatti S."/>
            <person name="Shin M."/>
            <person name="Vergez L."/>
            <person name="Schmutz J."/>
            <person name="Larimer F."/>
            <person name="Land M."/>
            <person name="Hauser L."/>
            <person name="Kyrpides N."/>
            <person name="Mikhailova N."/>
            <person name="Tiedje J."/>
            <person name="Richardson P."/>
        </authorList>
    </citation>
    <scope>NUCLEOTIDE SEQUENCE [LARGE SCALE GENOMIC DNA]</scope>
    <source>
        <strain>MC0-3</strain>
    </source>
</reference>
<organism>
    <name type="scientific">Burkholderia orbicola (strain MC0-3)</name>
    <dbReference type="NCBI Taxonomy" id="406425"/>
    <lineage>
        <taxon>Bacteria</taxon>
        <taxon>Pseudomonadati</taxon>
        <taxon>Pseudomonadota</taxon>
        <taxon>Betaproteobacteria</taxon>
        <taxon>Burkholderiales</taxon>
        <taxon>Burkholderiaceae</taxon>
        <taxon>Burkholderia</taxon>
        <taxon>Burkholderia cepacia complex</taxon>
        <taxon>Burkholderia orbicola</taxon>
    </lineage>
</organism>
<feature type="chain" id="PRO_1000100651" description="Cytidylate kinase">
    <location>
        <begin position="1"/>
        <end position="228"/>
    </location>
</feature>
<feature type="binding site" evidence="1">
    <location>
        <begin position="17"/>
        <end position="25"/>
    </location>
    <ligand>
        <name>ATP</name>
        <dbReference type="ChEBI" id="CHEBI:30616"/>
    </ligand>
</feature>
<protein>
    <recommendedName>
        <fullName evidence="1">Cytidylate kinase</fullName>
        <shortName evidence="1">CK</shortName>
        <ecNumber evidence="1">2.7.4.25</ecNumber>
    </recommendedName>
    <alternativeName>
        <fullName evidence="1">Cytidine monophosphate kinase</fullName>
        <shortName evidence="1">CMP kinase</shortName>
    </alternativeName>
</protein>
<accession>B1JXS0</accession>
<proteinExistence type="inferred from homology"/>
<gene>
    <name evidence="1" type="primary">cmk</name>
    <name type="ordered locus">Bcenmc03_1005</name>
</gene>
<evidence type="ECO:0000255" key="1">
    <source>
        <dbReference type="HAMAP-Rule" id="MF_00238"/>
    </source>
</evidence>
<dbReference type="EC" id="2.7.4.25" evidence="1"/>
<dbReference type="EMBL" id="CP000958">
    <property type="protein sequence ID" value="ACA90182.1"/>
    <property type="molecule type" value="Genomic_DNA"/>
</dbReference>
<dbReference type="RefSeq" id="WP_006476573.1">
    <property type="nucleotide sequence ID" value="NC_010508.1"/>
</dbReference>
<dbReference type="SMR" id="B1JXS0"/>
<dbReference type="GeneID" id="83047798"/>
<dbReference type="KEGG" id="bcm:Bcenmc03_1005"/>
<dbReference type="HOGENOM" id="CLU_079959_2_0_4"/>
<dbReference type="Proteomes" id="UP000002169">
    <property type="component" value="Chromosome 1"/>
</dbReference>
<dbReference type="GO" id="GO:0005829">
    <property type="term" value="C:cytosol"/>
    <property type="evidence" value="ECO:0007669"/>
    <property type="project" value="TreeGrafter"/>
</dbReference>
<dbReference type="GO" id="GO:0005524">
    <property type="term" value="F:ATP binding"/>
    <property type="evidence" value="ECO:0007669"/>
    <property type="project" value="UniProtKB-UniRule"/>
</dbReference>
<dbReference type="GO" id="GO:0036430">
    <property type="term" value="F:CMP kinase activity"/>
    <property type="evidence" value="ECO:0007669"/>
    <property type="project" value="RHEA"/>
</dbReference>
<dbReference type="GO" id="GO:0036431">
    <property type="term" value="F:dCMP kinase activity"/>
    <property type="evidence" value="ECO:0007669"/>
    <property type="project" value="RHEA"/>
</dbReference>
<dbReference type="GO" id="GO:0015949">
    <property type="term" value="P:nucleobase-containing small molecule interconversion"/>
    <property type="evidence" value="ECO:0007669"/>
    <property type="project" value="TreeGrafter"/>
</dbReference>
<dbReference type="GO" id="GO:0006220">
    <property type="term" value="P:pyrimidine nucleotide metabolic process"/>
    <property type="evidence" value="ECO:0007669"/>
    <property type="project" value="UniProtKB-UniRule"/>
</dbReference>
<dbReference type="CDD" id="cd02020">
    <property type="entry name" value="CMPK"/>
    <property type="match status" value="1"/>
</dbReference>
<dbReference type="Gene3D" id="3.40.50.300">
    <property type="entry name" value="P-loop containing nucleotide triphosphate hydrolases"/>
    <property type="match status" value="1"/>
</dbReference>
<dbReference type="HAMAP" id="MF_00238">
    <property type="entry name" value="Cytidyl_kinase_type1"/>
    <property type="match status" value="1"/>
</dbReference>
<dbReference type="InterPro" id="IPR003136">
    <property type="entry name" value="Cytidylate_kin"/>
</dbReference>
<dbReference type="InterPro" id="IPR011994">
    <property type="entry name" value="Cytidylate_kinase_dom"/>
</dbReference>
<dbReference type="InterPro" id="IPR027417">
    <property type="entry name" value="P-loop_NTPase"/>
</dbReference>
<dbReference type="NCBIfam" id="TIGR00017">
    <property type="entry name" value="cmk"/>
    <property type="match status" value="1"/>
</dbReference>
<dbReference type="PANTHER" id="PTHR21299:SF2">
    <property type="entry name" value="CYTIDYLATE KINASE"/>
    <property type="match status" value="1"/>
</dbReference>
<dbReference type="PANTHER" id="PTHR21299">
    <property type="entry name" value="CYTIDYLATE KINASE/PANTOATE-BETA-ALANINE LIGASE"/>
    <property type="match status" value="1"/>
</dbReference>
<dbReference type="Pfam" id="PF02224">
    <property type="entry name" value="Cytidylate_kin"/>
    <property type="match status" value="1"/>
</dbReference>
<dbReference type="SUPFAM" id="SSF52540">
    <property type="entry name" value="P-loop containing nucleoside triphosphate hydrolases"/>
    <property type="match status" value="1"/>
</dbReference>
<keyword id="KW-0067">ATP-binding</keyword>
<keyword id="KW-0963">Cytoplasm</keyword>
<keyword id="KW-0418">Kinase</keyword>
<keyword id="KW-0547">Nucleotide-binding</keyword>
<keyword id="KW-0808">Transferase</keyword>
<sequence length="228" mass="24381">MKSTRPFHPTPVITIDGPTASGKGTVAALVAAHLGFHLLDSGALYRLAALASVRYGIAAEDIDALVKLIDDLHITFREGCAQLDGVDVSNDIRAEAVGNRASAIAVHGPVRTALVARQRAFRKTPGLVADGRDMGTVIFPDAVLKVFLTASAEARATRRHKQLMQKGFSANIDDLLRDLRERDARDSNRAAAPLKPAADAKLLDTSALSVDEAVDQVLQWYRALGQPA</sequence>